<protein>
    <recommendedName>
        <fullName>Elongin-A</fullName>
    </recommendedName>
</protein>
<feature type="chain" id="PRO_0000239642" description="Elongin-A">
    <location>
        <begin position="1"/>
        <end position="332"/>
    </location>
</feature>
<feature type="domain" description="F-box" evidence="2">
    <location>
        <begin position="24"/>
        <end position="68"/>
    </location>
</feature>
<feature type="region of interest" description="Disordered" evidence="3">
    <location>
        <begin position="228"/>
        <end position="332"/>
    </location>
</feature>
<feature type="compositionally biased region" description="Polar residues" evidence="3">
    <location>
        <begin position="296"/>
        <end position="309"/>
    </location>
</feature>
<feature type="compositionally biased region" description="Basic residues" evidence="3">
    <location>
        <begin position="320"/>
        <end position="332"/>
    </location>
</feature>
<accession>Q75E67</accession>
<evidence type="ECO:0000250" key="1">
    <source>
        <dbReference type="UniProtKB" id="P53861"/>
    </source>
</evidence>
<evidence type="ECO:0000255" key="2">
    <source>
        <dbReference type="PROSITE-ProRule" id="PRU00080"/>
    </source>
</evidence>
<evidence type="ECO:0000256" key="3">
    <source>
        <dbReference type="SAM" id="MobiDB-lite"/>
    </source>
</evidence>
<evidence type="ECO:0000305" key="4"/>
<proteinExistence type="inferred from homology"/>
<keyword id="KW-1185">Reference proteome</keyword>
<reference key="1">
    <citation type="journal article" date="2004" name="Science">
        <title>The Ashbya gossypii genome as a tool for mapping the ancient Saccharomyces cerevisiae genome.</title>
        <authorList>
            <person name="Dietrich F.S."/>
            <person name="Voegeli S."/>
            <person name="Brachat S."/>
            <person name="Lerch A."/>
            <person name="Gates K."/>
            <person name="Steiner S."/>
            <person name="Mohr C."/>
            <person name="Poehlmann R."/>
            <person name="Luedi P."/>
            <person name="Choi S."/>
            <person name="Wing R.A."/>
            <person name="Flavier A."/>
            <person name="Gaffney T.D."/>
            <person name="Philippsen P."/>
        </authorList>
    </citation>
    <scope>NUCLEOTIDE SEQUENCE [LARGE SCALE GENOMIC DNA]</scope>
    <source>
        <strain>ATCC 10895 / CBS 109.51 / FGSC 9923 / NRRL Y-1056</strain>
    </source>
</reference>
<reference key="2">
    <citation type="journal article" date="2013" name="G3 (Bethesda)">
        <title>Genomes of Ashbya fungi isolated from insects reveal four mating-type loci, numerous translocations, lack of transposons, and distinct gene duplications.</title>
        <authorList>
            <person name="Dietrich F.S."/>
            <person name="Voegeli S."/>
            <person name="Kuo S."/>
            <person name="Philippsen P."/>
        </authorList>
    </citation>
    <scope>GENOME REANNOTATION</scope>
    <source>
        <strain>ATCC 10895 / CBS 109.51 / FGSC 9923 / NRRL Y-1056</strain>
    </source>
</reference>
<comment type="function">
    <text evidence="1">As part of the CRL3 E3 ubiquitin ligase complex; polyubiquitylates monoubiquitylated RNA polymerase II subunit RPO21 to trigger its proteolysis; plays a role in global genomic repair.</text>
</comment>
<comment type="subunit">
    <text evidence="1">Heterodimer with ELC1. Component of a CRL3 E3 ubiquitin ligase complex consisting of a cullin, the linker protein ELC1, the substrate receptor ELA1, and a RING protein. Interacts with the large RNA polymerase II subunit RPO21 in a manner dependent on DEF1.</text>
</comment>
<comment type="similarity">
    <text evidence="4">Belongs to the ELA1 family.</text>
</comment>
<organism>
    <name type="scientific">Eremothecium gossypii (strain ATCC 10895 / CBS 109.51 / FGSC 9923 / NRRL Y-1056)</name>
    <name type="common">Yeast</name>
    <name type="synonym">Ashbya gossypii</name>
    <dbReference type="NCBI Taxonomy" id="284811"/>
    <lineage>
        <taxon>Eukaryota</taxon>
        <taxon>Fungi</taxon>
        <taxon>Dikarya</taxon>
        <taxon>Ascomycota</taxon>
        <taxon>Saccharomycotina</taxon>
        <taxon>Saccharomycetes</taxon>
        <taxon>Saccharomycetales</taxon>
        <taxon>Saccharomycetaceae</taxon>
        <taxon>Eremothecium</taxon>
    </lineage>
</organism>
<dbReference type="EMBL" id="AE016815">
    <property type="protein sequence ID" value="AAS50574.1"/>
    <property type="molecule type" value="Genomic_DNA"/>
</dbReference>
<dbReference type="RefSeq" id="NP_982750.1">
    <property type="nucleotide sequence ID" value="NM_208103.1"/>
</dbReference>
<dbReference type="FunCoup" id="Q75E67">
    <property type="interactions" value="105"/>
</dbReference>
<dbReference type="STRING" id="284811.Q75E67"/>
<dbReference type="EnsemblFungi" id="AAS50574">
    <property type="protein sequence ID" value="AAS50574"/>
    <property type="gene ID" value="AGOS_ABL197C"/>
</dbReference>
<dbReference type="GeneID" id="4618829"/>
<dbReference type="KEGG" id="ago:AGOS_ABL197C"/>
<dbReference type="eggNOG" id="KOG2821">
    <property type="taxonomic scope" value="Eukaryota"/>
</dbReference>
<dbReference type="HOGENOM" id="CLU_062289_0_0_1"/>
<dbReference type="InParanoid" id="Q75E67"/>
<dbReference type="OMA" id="WLRFIKR"/>
<dbReference type="OrthoDB" id="21513at2759"/>
<dbReference type="Proteomes" id="UP000000591">
    <property type="component" value="Chromosome II"/>
</dbReference>
<dbReference type="GO" id="GO:0070449">
    <property type="term" value="C:elongin complex"/>
    <property type="evidence" value="ECO:0007669"/>
    <property type="project" value="InterPro"/>
</dbReference>
<dbReference type="GO" id="GO:0006368">
    <property type="term" value="P:transcription elongation by RNA polymerase II"/>
    <property type="evidence" value="ECO:0007669"/>
    <property type="project" value="InterPro"/>
</dbReference>
<dbReference type="Gene3D" id="6.10.250.3180">
    <property type="match status" value="1"/>
</dbReference>
<dbReference type="InterPro" id="IPR051870">
    <property type="entry name" value="Elongin-A_domain"/>
</dbReference>
<dbReference type="InterPro" id="IPR001810">
    <property type="entry name" value="F-box_dom"/>
</dbReference>
<dbReference type="InterPro" id="IPR010684">
    <property type="entry name" value="RNA_pol_II_trans_fac_SIII_A"/>
</dbReference>
<dbReference type="PANTHER" id="PTHR15141">
    <property type="entry name" value="TRANSCRIPTION ELONGATION FACTOR B POLYPEPTIDE 3"/>
    <property type="match status" value="1"/>
</dbReference>
<dbReference type="PANTHER" id="PTHR15141:SF76">
    <property type="entry name" value="TRANSCRIPTION ELONGATION FACTOR B POLYPEPTIDE 3"/>
    <property type="match status" value="1"/>
</dbReference>
<dbReference type="Pfam" id="PF06881">
    <property type="entry name" value="Elongin_A"/>
    <property type="match status" value="1"/>
</dbReference>
<dbReference type="PROSITE" id="PS50181">
    <property type="entry name" value="FBOX"/>
    <property type="match status" value="1"/>
</dbReference>
<gene>
    <name type="primary">ELA1</name>
    <name type="ordered locus">ABL197C</name>
</gene>
<name>ELOA1_EREGS</name>
<sequence length="332" mass="37873">METGHPPSLQELCVVVLMRHHAQLEDIGHMPYALVRRVLLKMSAEQLLRLERASPALLLEDEEAWQQLLKKDFPTNVHEVWVARKKDVYEYYLESVRELGPQVLEDRALVRSLLRAAVCKDPVLFKYRVPSRQLYQRYVHEDARRQELSAARLRQSTLQLQQEKQKTRITQLEDPLYLERELNAGRQRAAPQRSSIYLKSFKELRQRQAHFRSGGYDPTQRRIVRVQTPSAQPAASLHPPPQSAPMAGSPQKPAPPEQPLAASPTPEAPGPLAQRRRPSARRQPPPASPAKRRSALFSSPALSTLLPQQDDTDSDTGGRPPKKPRVYIHTPR</sequence>